<gene>
    <name type="primary">tfg1</name>
    <name type="ORF">SPCC1620.09c</name>
</gene>
<reference key="1">
    <citation type="journal article" date="2002" name="Nature">
        <title>The genome sequence of Schizosaccharomyces pombe.</title>
        <authorList>
            <person name="Wood V."/>
            <person name="Gwilliam R."/>
            <person name="Rajandream M.A."/>
            <person name="Lyne M.H."/>
            <person name="Lyne R."/>
            <person name="Stewart A."/>
            <person name="Sgouros J.G."/>
            <person name="Peat N."/>
            <person name="Hayles J."/>
            <person name="Baker S.G."/>
            <person name="Basham D."/>
            <person name="Bowman S."/>
            <person name="Brooks K."/>
            <person name="Brown D."/>
            <person name="Brown S."/>
            <person name="Chillingworth T."/>
            <person name="Churcher C.M."/>
            <person name="Collins M."/>
            <person name="Connor R."/>
            <person name="Cronin A."/>
            <person name="Davis P."/>
            <person name="Feltwell T."/>
            <person name="Fraser A."/>
            <person name="Gentles S."/>
            <person name="Goble A."/>
            <person name="Hamlin N."/>
            <person name="Harris D.E."/>
            <person name="Hidalgo J."/>
            <person name="Hodgson G."/>
            <person name="Holroyd S."/>
            <person name="Hornsby T."/>
            <person name="Howarth S."/>
            <person name="Huckle E.J."/>
            <person name="Hunt S."/>
            <person name="Jagels K."/>
            <person name="James K.D."/>
            <person name="Jones L."/>
            <person name="Jones M."/>
            <person name="Leather S."/>
            <person name="McDonald S."/>
            <person name="McLean J."/>
            <person name="Mooney P."/>
            <person name="Moule S."/>
            <person name="Mungall K.L."/>
            <person name="Murphy L.D."/>
            <person name="Niblett D."/>
            <person name="Odell C."/>
            <person name="Oliver K."/>
            <person name="O'Neil S."/>
            <person name="Pearson D."/>
            <person name="Quail M.A."/>
            <person name="Rabbinowitsch E."/>
            <person name="Rutherford K.M."/>
            <person name="Rutter S."/>
            <person name="Saunders D."/>
            <person name="Seeger K."/>
            <person name="Sharp S."/>
            <person name="Skelton J."/>
            <person name="Simmonds M.N."/>
            <person name="Squares R."/>
            <person name="Squares S."/>
            <person name="Stevens K."/>
            <person name="Taylor K."/>
            <person name="Taylor R.G."/>
            <person name="Tivey A."/>
            <person name="Walsh S.V."/>
            <person name="Warren T."/>
            <person name="Whitehead S."/>
            <person name="Woodward J.R."/>
            <person name="Volckaert G."/>
            <person name="Aert R."/>
            <person name="Robben J."/>
            <person name="Grymonprez B."/>
            <person name="Weltjens I."/>
            <person name="Vanstreels E."/>
            <person name="Rieger M."/>
            <person name="Schaefer M."/>
            <person name="Mueller-Auer S."/>
            <person name="Gabel C."/>
            <person name="Fuchs M."/>
            <person name="Duesterhoeft A."/>
            <person name="Fritzc C."/>
            <person name="Holzer E."/>
            <person name="Moestl D."/>
            <person name="Hilbert H."/>
            <person name="Borzym K."/>
            <person name="Langer I."/>
            <person name="Beck A."/>
            <person name="Lehrach H."/>
            <person name="Reinhardt R."/>
            <person name="Pohl T.M."/>
            <person name="Eger P."/>
            <person name="Zimmermann W."/>
            <person name="Wedler H."/>
            <person name="Wambutt R."/>
            <person name="Purnelle B."/>
            <person name="Goffeau A."/>
            <person name="Cadieu E."/>
            <person name="Dreano S."/>
            <person name="Gloux S."/>
            <person name="Lelaure V."/>
            <person name="Mottier S."/>
            <person name="Galibert F."/>
            <person name="Aves S.J."/>
            <person name="Xiang Z."/>
            <person name="Hunt C."/>
            <person name="Moore K."/>
            <person name="Hurst S.M."/>
            <person name="Lucas M."/>
            <person name="Rochet M."/>
            <person name="Gaillardin C."/>
            <person name="Tallada V.A."/>
            <person name="Garzon A."/>
            <person name="Thode G."/>
            <person name="Daga R.R."/>
            <person name="Cruzado L."/>
            <person name="Jimenez J."/>
            <person name="Sanchez M."/>
            <person name="del Rey F."/>
            <person name="Benito J."/>
            <person name="Dominguez A."/>
            <person name="Revuelta J.L."/>
            <person name="Moreno S."/>
            <person name="Armstrong J."/>
            <person name="Forsburg S.L."/>
            <person name="Cerutti L."/>
            <person name="Lowe T."/>
            <person name="McCombie W.R."/>
            <person name="Paulsen I."/>
            <person name="Potashkin J."/>
            <person name="Shpakovski G.V."/>
            <person name="Ussery D."/>
            <person name="Barrell B.G."/>
            <person name="Nurse P."/>
        </authorList>
    </citation>
    <scope>NUCLEOTIDE SEQUENCE [LARGE SCALE GENOMIC DNA]</scope>
    <source>
        <strain>972 / ATCC 24843</strain>
    </source>
</reference>
<reference key="2">
    <citation type="journal article" date="2004" name="Nucleic Acids Res.">
        <title>Tfg3, a subunit of the general transcription factor TFIIF in Schizosaccharomyces pombe, functions under stress conditions.</title>
        <authorList>
            <person name="Kimura M."/>
            <person name="Ishihama A."/>
        </authorList>
    </citation>
    <scope>INTERACTION WITH TFG3</scope>
</reference>
<reference key="3">
    <citation type="journal article" date="2008" name="J. Proteome Res.">
        <title>Phosphoproteome analysis of fission yeast.</title>
        <authorList>
            <person name="Wilson-Grady J.T."/>
            <person name="Villen J."/>
            <person name="Gygi S.P."/>
        </authorList>
    </citation>
    <scope>PHOSPHORYLATION [LARGE SCALE ANALYSIS] AT SER-259; SER-261 AND SER-399</scope>
    <scope>IDENTIFICATION BY MASS SPECTROMETRY</scope>
</reference>
<sequence>MDSQETKVFENVKQENPDEKKPKVEEPDSQNNASTQSQQKFLDFQLSWCPESERKTTKYHLLKFHSNKAIDPSKSFVPPIKMQRRDPNAPSSSNGEQNAEQGSSSNVNIASIAPYGGAQNMKQNAFKRKTRQVVKVDPQARRLQEEELSPWIMEDFEGKNTWVSTMEGGQSSAYVLFMFSENGFKVIPTDRFYRFNQRNNFQTLSIDEAEAKMNKKTPIPRWFMKKESEENLAEAGSASPMYKLKTVPNARPVTGPRASGSDDELDYDEEFADDEEAPIMEGNEEDNKKLKDKIKKEMLTANLFGEADQDVDLEEENDRQMSREGKKLQRYLKLLEKNLAYESDEEDEDPYASSHDASSEEEVLQEEEELQKREEKLKSRFSANASKTNTPRPLERTPSSVSPVKASSQLQSPNTSIQIRPQEQLINKPGYIILRLSSEKLSRFANDFPRMVPSMGSTETSVGDQVEVVGDTTNVPIDDSNLITEAEVMKALRAGPISIKDLVHLFQRKIRADNRNRLGIQKIIRKVARFENKLLVLKNY</sequence>
<evidence type="ECO:0000250" key="1"/>
<evidence type="ECO:0000255" key="2"/>
<evidence type="ECO:0000256" key="3">
    <source>
        <dbReference type="SAM" id="MobiDB-lite"/>
    </source>
</evidence>
<evidence type="ECO:0000269" key="4">
    <source>
    </source>
</evidence>
<evidence type="ECO:0000305" key="5"/>
<dbReference type="EMBL" id="CU329672">
    <property type="protein sequence ID" value="CAA22493.2"/>
    <property type="molecule type" value="Genomic_DNA"/>
</dbReference>
<dbReference type="PIR" id="T41039">
    <property type="entry name" value="T41039"/>
</dbReference>
<dbReference type="RefSeq" id="NP_588467.2">
    <property type="nucleotide sequence ID" value="NM_001023458.3"/>
</dbReference>
<dbReference type="SMR" id="O94416"/>
<dbReference type="FunCoup" id="O94416">
    <property type="interactions" value="72"/>
</dbReference>
<dbReference type="IntAct" id="O94416">
    <property type="interactions" value="2"/>
</dbReference>
<dbReference type="STRING" id="284812.O94416"/>
<dbReference type="iPTMnet" id="O94416"/>
<dbReference type="PaxDb" id="4896-SPCC1620.09c.1"/>
<dbReference type="GeneID" id="2539294"/>
<dbReference type="KEGG" id="spo:2539294"/>
<dbReference type="PomBase" id="SPCC1620.09c">
    <property type="gene designation" value="tfg1"/>
</dbReference>
<dbReference type="eggNOG" id="KOG2393">
    <property type="taxonomic scope" value="Eukaryota"/>
</dbReference>
<dbReference type="HOGENOM" id="CLU_020322_0_0_1"/>
<dbReference type="InParanoid" id="O94416"/>
<dbReference type="PhylomeDB" id="O94416"/>
<dbReference type="Reactome" id="R-SPO-113418">
    <property type="pathway name" value="Formation of the Early Elongation Complex"/>
</dbReference>
<dbReference type="Reactome" id="R-SPO-674695">
    <property type="pathway name" value="RNA Polymerase II Pre-transcription Events"/>
</dbReference>
<dbReference type="Reactome" id="R-SPO-6796648">
    <property type="pathway name" value="TP53 Regulates Transcription of DNA Repair Genes"/>
</dbReference>
<dbReference type="Reactome" id="R-SPO-6807505">
    <property type="pathway name" value="RNA polymerase II transcribes snRNA genes"/>
</dbReference>
<dbReference type="Reactome" id="R-SPO-72086">
    <property type="pathway name" value="mRNA Capping"/>
</dbReference>
<dbReference type="Reactome" id="R-SPO-72163">
    <property type="pathway name" value="mRNA Splicing - Major Pathway"/>
</dbReference>
<dbReference type="Reactome" id="R-SPO-72203">
    <property type="pathway name" value="Processing of Capped Intron-Containing Pre-mRNA"/>
</dbReference>
<dbReference type="Reactome" id="R-SPO-73776">
    <property type="pathway name" value="RNA Polymerase II Promoter Escape"/>
</dbReference>
<dbReference type="Reactome" id="R-SPO-73779">
    <property type="pathway name" value="RNA Polymerase II Transcription Pre-Initiation And Promoter Opening"/>
</dbReference>
<dbReference type="Reactome" id="R-SPO-75953">
    <property type="pathway name" value="RNA Polymerase II Transcription Initiation"/>
</dbReference>
<dbReference type="Reactome" id="R-SPO-76042">
    <property type="pathway name" value="RNA Polymerase II Transcription Initiation And Promoter Clearance"/>
</dbReference>
<dbReference type="Reactome" id="R-SPO-77075">
    <property type="pathway name" value="RNA Pol II CTD phosphorylation and interaction with CE"/>
</dbReference>
<dbReference type="Reactome" id="R-SPO-9018519">
    <property type="pathway name" value="Estrogen-dependent gene expression"/>
</dbReference>
<dbReference type="PRO" id="PR:O94416"/>
<dbReference type="Proteomes" id="UP000002485">
    <property type="component" value="Chromosome III"/>
</dbReference>
<dbReference type="GO" id="GO:0005829">
    <property type="term" value="C:cytosol"/>
    <property type="evidence" value="ECO:0007005"/>
    <property type="project" value="PomBase"/>
</dbReference>
<dbReference type="GO" id="GO:0005634">
    <property type="term" value="C:nucleus"/>
    <property type="evidence" value="ECO:0007005"/>
    <property type="project" value="PomBase"/>
</dbReference>
<dbReference type="GO" id="GO:0005674">
    <property type="term" value="C:transcription factor TFIIF complex"/>
    <property type="evidence" value="ECO:0000314"/>
    <property type="project" value="PomBase"/>
</dbReference>
<dbReference type="GO" id="GO:0003677">
    <property type="term" value="F:DNA binding"/>
    <property type="evidence" value="ECO:0007669"/>
    <property type="project" value="UniProtKB-KW"/>
</dbReference>
<dbReference type="GO" id="GO:0072542">
    <property type="term" value="F:protein phosphatase activator activity"/>
    <property type="evidence" value="ECO:0000266"/>
    <property type="project" value="PomBase"/>
</dbReference>
<dbReference type="GO" id="GO:0016251">
    <property type="term" value="F:RNA polymerase II general transcription initiation factor activity"/>
    <property type="evidence" value="ECO:0000314"/>
    <property type="project" value="PomBase"/>
</dbReference>
<dbReference type="GO" id="GO:0001096">
    <property type="term" value="F:TFIIF-class transcription factor complex binding"/>
    <property type="evidence" value="ECO:0000318"/>
    <property type="project" value="GO_Central"/>
</dbReference>
<dbReference type="GO" id="GO:0032968">
    <property type="term" value="P:positive regulation of transcription elongation by RNA polymerase II"/>
    <property type="evidence" value="ECO:0007669"/>
    <property type="project" value="InterPro"/>
</dbReference>
<dbReference type="GO" id="GO:0006367">
    <property type="term" value="P:transcription initiation at RNA polymerase II promoter"/>
    <property type="evidence" value="ECO:0000314"/>
    <property type="project" value="PomBase"/>
</dbReference>
<dbReference type="InterPro" id="IPR008851">
    <property type="entry name" value="TFIIF-alpha"/>
</dbReference>
<dbReference type="InterPro" id="IPR011039">
    <property type="entry name" value="TFIIF_interaction"/>
</dbReference>
<dbReference type="PANTHER" id="PTHR13011:SF0">
    <property type="entry name" value="GENERAL TRANSCRIPTION FACTOR IIF SUBUNIT 1"/>
    <property type="match status" value="1"/>
</dbReference>
<dbReference type="PANTHER" id="PTHR13011">
    <property type="entry name" value="TFIIF-ALPHA"/>
    <property type="match status" value="1"/>
</dbReference>
<dbReference type="Pfam" id="PF05793">
    <property type="entry name" value="TFIIF_alpha"/>
    <property type="match status" value="1"/>
</dbReference>
<dbReference type="SUPFAM" id="SSF50916">
    <property type="entry name" value="Rap30/74 interaction domains"/>
    <property type="match status" value="1"/>
</dbReference>
<feature type="chain" id="PRO_0000238604" description="Transcription initiation factor IIF subunit alpha">
    <location>
        <begin position="1"/>
        <end position="540"/>
    </location>
</feature>
<feature type="region of interest" description="Disordered" evidence="3">
    <location>
        <begin position="1"/>
        <end position="39"/>
    </location>
</feature>
<feature type="region of interest" description="Disordered" evidence="3">
    <location>
        <begin position="70"/>
        <end position="106"/>
    </location>
</feature>
<feature type="region of interest" description="Disordered" evidence="3">
    <location>
        <begin position="341"/>
        <end position="416"/>
    </location>
</feature>
<feature type="coiled-coil region" evidence="2">
    <location>
        <begin position="280"/>
        <end position="382"/>
    </location>
</feature>
<feature type="compositionally biased region" description="Basic and acidic residues" evidence="3">
    <location>
        <begin position="1"/>
        <end position="26"/>
    </location>
</feature>
<feature type="compositionally biased region" description="Polar residues" evidence="3">
    <location>
        <begin position="29"/>
        <end position="39"/>
    </location>
</feature>
<feature type="compositionally biased region" description="Polar residues" evidence="3">
    <location>
        <begin position="89"/>
        <end position="106"/>
    </location>
</feature>
<feature type="compositionally biased region" description="Acidic residues" evidence="3">
    <location>
        <begin position="359"/>
        <end position="369"/>
    </location>
</feature>
<feature type="compositionally biased region" description="Polar residues" evidence="3">
    <location>
        <begin position="381"/>
        <end position="416"/>
    </location>
</feature>
<feature type="modified residue" description="Phosphoserine" evidence="4">
    <location>
        <position position="259"/>
    </location>
</feature>
<feature type="modified residue" description="Phosphoserine" evidence="4">
    <location>
        <position position="261"/>
    </location>
</feature>
<feature type="modified residue" description="Phosphoserine" evidence="4">
    <location>
        <position position="399"/>
    </location>
</feature>
<organism>
    <name type="scientific">Schizosaccharomyces pombe (strain 972 / ATCC 24843)</name>
    <name type="common">Fission yeast</name>
    <dbReference type="NCBI Taxonomy" id="284812"/>
    <lineage>
        <taxon>Eukaryota</taxon>
        <taxon>Fungi</taxon>
        <taxon>Dikarya</taxon>
        <taxon>Ascomycota</taxon>
        <taxon>Taphrinomycotina</taxon>
        <taxon>Schizosaccharomycetes</taxon>
        <taxon>Schizosaccharomycetales</taxon>
        <taxon>Schizosaccharomycetaceae</taxon>
        <taxon>Schizosaccharomyces</taxon>
    </lineage>
</organism>
<proteinExistence type="evidence at protein level"/>
<accession>O94416</accession>
<protein>
    <recommendedName>
        <fullName>Transcription initiation factor IIF subunit alpha</fullName>
        <shortName>TFIIF-alpha</shortName>
    </recommendedName>
    <alternativeName>
        <fullName>TFIIF large subunit</fullName>
    </alternativeName>
</protein>
<keyword id="KW-0175">Coiled coil</keyword>
<keyword id="KW-0238">DNA-binding</keyword>
<keyword id="KW-0539">Nucleus</keyword>
<keyword id="KW-0597">Phosphoprotein</keyword>
<keyword id="KW-1185">Reference proteome</keyword>
<keyword id="KW-0804">Transcription</keyword>
<keyword id="KW-0805">Transcription regulation</keyword>
<comment type="function">
    <text evidence="1">TFIIF is a general transcription initiation factor that binds to RNA polymerase II and helps to recruit it to the initiation complex in collaboration with TFIIB. It promotes transcription elongation (By similarity).</text>
</comment>
<comment type="subunit">
    <text>Component of the fcp1/TFIIF/polII complex via interaction of tfg3 with both tfg1/TFIIF-alpha and tfg2/TFIIF-beta subunits.</text>
</comment>
<comment type="subcellular location">
    <subcellularLocation>
        <location evidence="1">Nucleus</location>
    </subcellularLocation>
</comment>
<comment type="similarity">
    <text evidence="5">Belongs to the TFIIF alpha subunit family.</text>
</comment>
<name>T2FA_SCHPO</name>